<reference key="1">
    <citation type="journal article" date="1988" name="J. Biol. Chem.">
        <title>Asparaginase II of Saccharomyces cerevisiae. Characterization of the ASP3 gene.</title>
        <authorList>
            <person name="Kim K.-W."/>
            <person name="Kamerud J.Q."/>
            <person name="Livingston D.M."/>
            <person name="Roon R.J."/>
        </authorList>
    </citation>
    <scope>NUCLEOTIDE SEQUENCE [GENOMIC DNA]</scope>
    <scope>PROTEIN SEQUENCE OF 26-41 AND 56-71</scope>
    <scope>VARIANT 26-GLU--ALA-55 DEL</scope>
</reference>
<reference key="2">
    <citation type="journal article" date="1997" name="Nature">
        <title>The nucleotide sequence of Saccharomyces cerevisiae chromosome XII.</title>
        <authorList>
            <person name="Johnston M."/>
            <person name="Hillier L.W."/>
            <person name="Riles L."/>
            <person name="Albermann K."/>
            <person name="Andre B."/>
            <person name="Ansorge W."/>
            <person name="Benes V."/>
            <person name="Brueckner M."/>
            <person name="Delius H."/>
            <person name="Dubois E."/>
            <person name="Duesterhoeft A."/>
            <person name="Entian K.-D."/>
            <person name="Floeth M."/>
            <person name="Goffeau A."/>
            <person name="Hebling U."/>
            <person name="Heumann K."/>
            <person name="Heuss-Neitzel D."/>
            <person name="Hilbert H."/>
            <person name="Hilger F."/>
            <person name="Kleine K."/>
            <person name="Koetter P."/>
            <person name="Louis E.J."/>
            <person name="Messenguy F."/>
            <person name="Mewes H.-W."/>
            <person name="Miosga T."/>
            <person name="Moestl D."/>
            <person name="Mueller-Auer S."/>
            <person name="Nentwich U."/>
            <person name="Obermaier B."/>
            <person name="Piravandi E."/>
            <person name="Pohl T.M."/>
            <person name="Portetelle D."/>
            <person name="Purnelle B."/>
            <person name="Rechmann S."/>
            <person name="Rieger M."/>
            <person name="Rinke M."/>
            <person name="Rose M."/>
            <person name="Scharfe M."/>
            <person name="Scherens B."/>
            <person name="Scholler P."/>
            <person name="Schwager C."/>
            <person name="Schwarz S."/>
            <person name="Underwood A.P."/>
            <person name="Urrestarazu L.A."/>
            <person name="Vandenbol M."/>
            <person name="Verhasselt P."/>
            <person name="Vierendeels F."/>
            <person name="Voet M."/>
            <person name="Volckaert G."/>
            <person name="Voss H."/>
            <person name="Wambutt R."/>
            <person name="Wedler E."/>
            <person name="Wedler H."/>
            <person name="Zimmermann F.K."/>
            <person name="Zollner A."/>
            <person name="Hani J."/>
            <person name="Hoheisel J.D."/>
        </authorList>
    </citation>
    <scope>NUCLEOTIDE SEQUENCE [LARGE SCALE GENOMIC DNA]</scope>
    <source>
        <strain>ATCC 204508 / S288c</strain>
    </source>
</reference>
<reference key="3">
    <citation type="journal article" date="2014" name="G3 (Bethesda)">
        <title>The reference genome sequence of Saccharomyces cerevisiae: Then and now.</title>
        <authorList>
            <person name="Engel S.R."/>
            <person name="Dietrich F.S."/>
            <person name="Fisk D.G."/>
            <person name="Binkley G."/>
            <person name="Balakrishnan R."/>
            <person name="Costanzo M.C."/>
            <person name="Dwight S.S."/>
            <person name="Hitz B.C."/>
            <person name="Karra K."/>
            <person name="Nash R.S."/>
            <person name="Weng S."/>
            <person name="Wong E.D."/>
            <person name="Lloyd P."/>
            <person name="Skrzypek M.S."/>
            <person name="Miyasato S.R."/>
            <person name="Simison M."/>
            <person name="Cherry J.M."/>
        </authorList>
    </citation>
    <scope>GENOME REANNOTATION</scope>
    <source>
        <strain>ATCC 204508 / S288c</strain>
    </source>
</reference>
<reference key="4">
    <citation type="journal article" date="1978" name="J. Biol. Chem.">
        <title>Characterization of two forms of asparaginase in Saccharomyces cerevisiae.</title>
        <authorList>
            <person name="Dunlop P.C."/>
            <person name="Meyer G.M."/>
            <person name="Ban D."/>
            <person name="Roon R.J."/>
        </authorList>
    </citation>
    <scope>BIOPHYSICOCHEMICAL PROPERTIES</scope>
</reference>
<reference key="5">
    <citation type="journal article" date="1980" name="J. Bacteriol.">
        <title>Nitrogen catabolite repression of asparaginase II in Saccharomyces cerevisiae.</title>
        <authorList>
            <person name="Dunlop P.C."/>
            <person name="Meyer G.M."/>
            <person name="Roon R.J."/>
        </authorList>
    </citation>
    <scope>INDUCTION</scope>
</reference>
<reference key="6">
    <citation type="journal article" date="1980" name="J. Biol. Chem.">
        <title>Reactions of asparaginase II of Saccharomyces cerevisiae. A mechanistic analysis of hydrolysis and hydroxylaminolysis.</title>
        <authorList>
            <person name="Dunlop P.C."/>
            <person name="Meyer G.M."/>
            <person name="Roon R.J."/>
        </authorList>
    </citation>
    <scope>BIOPHYSICOCHEMICAL PROPERTIES</scope>
</reference>
<evidence type="ECO:0000250" key="1"/>
<evidence type="ECO:0000255" key="2"/>
<evidence type="ECO:0000255" key="3">
    <source>
        <dbReference type="PROSITE-ProRule" id="PRU01068"/>
    </source>
</evidence>
<evidence type="ECO:0000255" key="4">
    <source>
        <dbReference type="PROSITE-ProRule" id="PRU10099"/>
    </source>
</evidence>
<evidence type="ECO:0000255" key="5">
    <source>
        <dbReference type="PROSITE-ProRule" id="PRU10100"/>
    </source>
</evidence>
<evidence type="ECO:0000269" key="6">
    <source>
    </source>
</evidence>
<evidence type="ECO:0000269" key="7">
    <source>
    </source>
</evidence>
<evidence type="ECO:0000269" key="8">
    <source>
    </source>
</evidence>
<evidence type="ECO:0000269" key="9">
    <source>
    </source>
</evidence>
<evidence type="ECO:0000305" key="10"/>
<accession>P0CX78</accession>
<accession>D6VYF3</accession>
<accession>P11163</accession>
<accession>Q12268</accession>
<accession>Q6Q5K8</accession>
<accession>Q6Q5K9</accession>
<keyword id="KW-0903">Direct protein sequencing</keyword>
<keyword id="KW-0325">Glycoprotein</keyword>
<keyword id="KW-0378">Hydrolase</keyword>
<keyword id="KW-0574">Periplasm</keyword>
<keyword id="KW-1185">Reference proteome</keyword>
<keyword id="KW-0964">Secreted</keyword>
<keyword id="KW-0732">Signal</keyword>
<proteinExistence type="evidence at protein level"/>
<feature type="signal peptide" evidence="6">
    <location>
        <begin position="1"/>
        <end position="25"/>
    </location>
</feature>
<feature type="chain" id="PRO_0000410442" description="L-asparaginase 2-3">
    <location>
        <begin position="26"/>
        <end position="362"/>
    </location>
</feature>
<feature type="domain" description="Asparaginase/glutaminase" evidence="3">
    <location>
        <begin position="33"/>
        <end position="359"/>
    </location>
</feature>
<feature type="active site" description="O-isoaspartyl threonine intermediate" evidence="4 5">
    <location>
        <position position="43"/>
    </location>
</feature>
<feature type="binding site" evidence="1">
    <location>
        <position position="89"/>
    </location>
    <ligand>
        <name>substrate</name>
    </ligand>
</feature>
<feature type="binding site" evidence="1">
    <location>
        <begin position="122"/>
        <end position="123"/>
    </location>
    <ligand>
        <name>substrate</name>
    </ligand>
</feature>
<feature type="glycosylation site" description="N-linked (GlcNAc...) asparagine" evidence="2">
    <location>
        <position position="29"/>
    </location>
</feature>
<feature type="glycosylation site" description="N-linked (GlcNAc...) asparagine" evidence="2">
    <location>
        <position position="93"/>
    </location>
</feature>
<feature type="glycosylation site" description="N-linked (GlcNAc...) asparagine" evidence="2">
    <location>
        <position position="239"/>
    </location>
</feature>
<feature type="sequence variant" evidence="6">
    <location>
        <begin position="26"/>
        <end position="55"/>
    </location>
</feature>
<gene>
    <name type="primary">ASP3-3</name>
    <name type="ordered locus">YLR158C</name>
    <name type="ORF">L9632.8</name>
</gene>
<comment type="catalytic activity">
    <reaction>
        <text>L-asparagine + H2O = L-aspartate + NH4(+)</text>
        <dbReference type="Rhea" id="RHEA:21016"/>
        <dbReference type="ChEBI" id="CHEBI:15377"/>
        <dbReference type="ChEBI" id="CHEBI:28938"/>
        <dbReference type="ChEBI" id="CHEBI:29991"/>
        <dbReference type="ChEBI" id="CHEBI:58048"/>
        <dbReference type="EC" id="3.5.1.1"/>
    </reaction>
</comment>
<comment type="biophysicochemical properties">
    <kinetics>
        <KM evidence="7 8">0.27 mM for L-asparagine</KM>
        <KM evidence="7 8">0.27 mM for D-asparagine</KM>
        <KM evidence="7 8">0.27 mM for N-acetyl-L-asparagine</KM>
        <KM evidence="7 8">0.07 mM for N-carbamyl-L-asparagine</KM>
        <KM evidence="7 8">0.06 mM for N-isoleucyl-L-asparagine</KM>
        <KM evidence="7 8">0.06 mM for N-glycyl-L-asparagine</KM>
        <KM evidence="7 8">0.06 mM for N-valyl-L-asparagine</KM>
        <KM evidence="7 8">0.2 mM for N-methionyl-L-asparagine</KM>
        <KM evidence="7 8">0.4 mM for N-glycyl-D-asparagine</KM>
        <Vmax evidence="7 8">42.0 umol/min/mg enzyme for L-asparagine</Vmax>
        <Vmax evidence="7 8">60.0 umol/min/mg enzyme for D-asparagine</Vmax>
        <Vmax evidence="7 8">167.0 umol/min/mg enzyme for N-acetyl-L-asparagine</Vmax>
        <Vmax evidence="7 8">79.0 umol/min/mg enzyme for N-carbamyl-L-asparagine</Vmax>
        <Vmax evidence="7 8">67.0 umol/min/mg enzyme for N-isoleucyl-L-asparagine</Vmax>
        <Vmax evidence="7 8">135.0 umol/min/mg enzyme for N-glycyl-L-asparagine</Vmax>
        <Vmax evidence="7 8">56.0 umol/min/mg enzyme for N-valyl-L-asparagine</Vmax>
        <Vmax evidence="7 8">92.0 umol/min/mg enzyme for N-methionyl-L-asparagine</Vmax>
        <Vmax evidence="7 8">8.0 umol/min/mg enzyme for N-glycyl-D-asparagine</Vmax>
        <text>Does not act on isoasparagine, L-aspartate diamide, beta-alanine amide and L-glutamine.</text>
    </kinetics>
    <phDependence>
        <text evidence="7 8">Optimum pH is 6.8. Active from pH 5.5 to pH 7.5. Stable from pH 3.5 to pH 10.5.</text>
    </phDependence>
</comment>
<comment type="subcellular location">
    <subcellularLocation>
        <location>Secreted</location>
    </subcellularLocation>
    <subcellularLocation>
        <location>Periplasm</location>
    </subcellularLocation>
</comment>
<comment type="induction">
    <text evidence="9">Subject to nitrogen catabolite repression (NCR). Not found in cells grown on rich nitrogen sources like ammonia, glutamine or glutamate, but is found in cells that have been subjected to nitrogen starvation or have been grown on a poor nitrogen source such as proline.</text>
</comment>
<comment type="miscellaneous">
    <text>Yeast contains 2 L-asparaginase isoenzymes: cytoplasmic L-asparaginase I, and cell wall L-asparaginase II.</text>
</comment>
<comment type="miscellaneous">
    <text>There are 4 copies for L-asparaginase 2 in yeast. The 4 identical copies ASP3-1, ASP3-2, ASP3-3 and ASP3-4 are arranged in tandem repeats located near a ribosomal DNA cluster.</text>
</comment>
<comment type="similarity">
    <text evidence="10">Belongs to the asparaginase 1 family.</text>
</comment>
<sequence length="362" mass="38687">MRSLNTLLLSLFVAMSSGAPLLKIREEKNSSLPSIKIFGTGGTIASKGSTSATTAGYSVGLTVNDLIEAVPSLAEKANLDYLQVSNVGSNSLNYTHLIPLYHGISEALASDDYAGAVVTHGTDTMEETAFFLDLTINSEKPVCIAGAMRPATATSADGPMNLYQAVSIAASEKSLGRGTMITLNDRIASGFWTTKMNANSLDTFRADEQGYLGYFSNDDVEFYYPPVKPNGWQFFDISNLTDPSEIPEVIILYSYQGLNPELIVKAVKDLGAKGIVLAGSGAGSWTATGSIVNEQLYEEYGIPIVHSRRTADGTVPPDDAPEYAIGSGYLNPQKSRILLQLCLYSGYGMDQIRSVFSGVYGG</sequence>
<name>ASP23_YEAST</name>
<protein>
    <recommendedName>
        <fullName>L-asparaginase 2-3</fullName>
        <ecNumber>3.5.1.1</ecNumber>
    </recommendedName>
    <alternativeName>
        <fullName>L-asparaginase II</fullName>
    </alternativeName>
    <alternativeName>
        <fullName>L-asparagine amidohydrolase II</fullName>
        <shortName>ASP II</shortName>
    </alternativeName>
</protein>
<organism>
    <name type="scientific">Saccharomyces cerevisiae (strain ATCC 204508 / S288c)</name>
    <name type="common">Baker's yeast</name>
    <dbReference type="NCBI Taxonomy" id="559292"/>
    <lineage>
        <taxon>Eukaryota</taxon>
        <taxon>Fungi</taxon>
        <taxon>Dikarya</taxon>
        <taxon>Ascomycota</taxon>
        <taxon>Saccharomycotina</taxon>
        <taxon>Saccharomycetes</taxon>
        <taxon>Saccharomycetales</taxon>
        <taxon>Saccharomycetaceae</taxon>
        <taxon>Saccharomyces</taxon>
    </lineage>
</organism>
<dbReference type="EC" id="3.5.1.1"/>
<dbReference type="EMBL" id="U51921">
    <property type="protein sequence ID" value="AAB67482.1"/>
    <property type="molecule type" value="Genomic_DNA"/>
</dbReference>
<dbReference type="EMBL" id="BK006945">
    <property type="protein sequence ID" value="DAA09478.1"/>
    <property type="molecule type" value="Genomic_DNA"/>
</dbReference>
<dbReference type="PIR" id="S68471">
    <property type="entry name" value="S68471"/>
</dbReference>
<dbReference type="RefSeq" id="NP_013259.1">
    <property type="nucleotide sequence ID" value="NM_001182045.1"/>
</dbReference>
<dbReference type="SMR" id="P0CX78"/>
<dbReference type="BioGRID" id="31426">
    <property type="interactions" value="3"/>
</dbReference>
<dbReference type="BioGRID" id="31428">
    <property type="interactions" value="39"/>
</dbReference>
<dbReference type="BioGRID" id="31431">
    <property type="interactions" value="61"/>
</dbReference>
<dbReference type="BioGRID" id="31433">
    <property type="interactions" value="31"/>
</dbReference>
<dbReference type="FunCoup" id="P0CX78">
    <property type="interactions" value="77"/>
</dbReference>
<dbReference type="GlyCosmos" id="P0CX78">
    <property type="glycosylation" value="3 sites, No reported glycans"/>
</dbReference>
<dbReference type="GlyGen" id="P0CX78">
    <property type="glycosylation" value="3 sites"/>
</dbReference>
<dbReference type="EnsemblFungi" id="YLR155C_mRNA">
    <property type="protein sequence ID" value="YLR155C"/>
    <property type="gene ID" value="YLR155C"/>
</dbReference>
<dbReference type="EnsemblFungi" id="YLR157C_mRNA">
    <property type="protein sequence ID" value="YLR157C"/>
    <property type="gene ID" value="YLR157C"/>
</dbReference>
<dbReference type="EnsemblFungi" id="YLR158C_mRNA">
    <property type="protein sequence ID" value="YLR158C"/>
    <property type="gene ID" value="YLR158C"/>
</dbReference>
<dbReference type="EnsemblFungi" id="YLR160C_mRNA">
    <property type="protein sequence ID" value="YLR160C"/>
    <property type="gene ID" value="YLR160C"/>
</dbReference>
<dbReference type="GeneID" id="850855"/>
<dbReference type="KEGG" id="sce:YLR155C"/>
<dbReference type="KEGG" id="sce:YLR157C"/>
<dbReference type="KEGG" id="sce:YLR158C"/>
<dbReference type="KEGG" id="sce:YLR160C"/>
<dbReference type="AGR" id="SGD:S000004148"/>
<dbReference type="SGD" id="S000004148">
    <property type="gene designation" value="ASP3-3"/>
</dbReference>
<dbReference type="VEuPathDB" id="FungiDB:YLR155C"/>
<dbReference type="VEuPathDB" id="FungiDB:YLR157C"/>
<dbReference type="VEuPathDB" id="FungiDB:YLR158C"/>
<dbReference type="VEuPathDB" id="FungiDB:YLR160C"/>
<dbReference type="HOGENOM" id="CLU_019134_1_1_1"/>
<dbReference type="InParanoid" id="P0CX78"/>
<dbReference type="OMA" id="TKTYGFH"/>
<dbReference type="OrthoDB" id="542841at2759"/>
<dbReference type="BioCyc" id="YEAST:YLR158C-MONOMER"/>
<dbReference type="PRO" id="PR:P0CX78"/>
<dbReference type="Proteomes" id="UP000002311">
    <property type="component" value="Chromosome XII"/>
</dbReference>
<dbReference type="RNAct" id="P0CX78">
    <property type="molecule type" value="protein"/>
</dbReference>
<dbReference type="ExpressionAtlas" id="P0CX78">
    <property type="expression patterns" value="baseline"/>
</dbReference>
<dbReference type="GO" id="GO:0030287">
    <property type="term" value="C:cell wall-bounded periplasmic space"/>
    <property type="evidence" value="ECO:0000314"/>
    <property type="project" value="SGD"/>
</dbReference>
<dbReference type="GO" id="GO:0005576">
    <property type="term" value="C:extracellular region"/>
    <property type="evidence" value="ECO:0007669"/>
    <property type="project" value="UniProtKB-SubCell"/>
</dbReference>
<dbReference type="GO" id="GO:0042597">
    <property type="term" value="C:periplasmic space"/>
    <property type="evidence" value="ECO:0000318"/>
    <property type="project" value="GO_Central"/>
</dbReference>
<dbReference type="GO" id="GO:0004067">
    <property type="term" value="F:asparaginase activity"/>
    <property type="evidence" value="ECO:0000314"/>
    <property type="project" value="SGD"/>
</dbReference>
<dbReference type="GO" id="GO:0006530">
    <property type="term" value="P:asparagine catabolic process"/>
    <property type="evidence" value="ECO:0000314"/>
    <property type="project" value="SGD"/>
</dbReference>
<dbReference type="GO" id="GO:0006995">
    <property type="term" value="P:cellular response to nitrogen starvation"/>
    <property type="evidence" value="ECO:0000314"/>
    <property type="project" value="SGD"/>
</dbReference>
<dbReference type="CDD" id="cd08964">
    <property type="entry name" value="L-asparaginase_II"/>
    <property type="match status" value="1"/>
</dbReference>
<dbReference type="FunFam" id="3.40.50.1170:FF:000001">
    <property type="entry name" value="L-asparaginase 2"/>
    <property type="match status" value="1"/>
</dbReference>
<dbReference type="FunFam" id="3.40.50.40:FF:000006">
    <property type="entry name" value="L-asparaginase I"/>
    <property type="match status" value="1"/>
</dbReference>
<dbReference type="Gene3D" id="3.40.50.40">
    <property type="match status" value="1"/>
</dbReference>
<dbReference type="Gene3D" id="3.40.50.1170">
    <property type="entry name" value="L-asparaginase, N-terminal domain"/>
    <property type="match status" value="1"/>
</dbReference>
<dbReference type="InterPro" id="IPR004550">
    <property type="entry name" value="AsnASE_II"/>
</dbReference>
<dbReference type="InterPro" id="IPR036152">
    <property type="entry name" value="Asp/glu_Ase-like_sf"/>
</dbReference>
<dbReference type="InterPro" id="IPR006034">
    <property type="entry name" value="Asparaginase/glutaminase-like"/>
</dbReference>
<dbReference type="InterPro" id="IPR020827">
    <property type="entry name" value="Asparaginase/glutaminase_AS1"/>
</dbReference>
<dbReference type="InterPro" id="IPR027475">
    <property type="entry name" value="Asparaginase/glutaminase_AS2"/>
</dbReference>
<dbReference type="InterPro" id="IPR040919">
    <property type="entry name" value="Asparaginase_C"/>
</dbReference>
<dbReference type="InterPro" id="IPR027473">
    <property type="entry name" value="L-asparaginase_C"/>
</dbReference>
<dbReference type="InterPro" id="IPR027474">
    <property type="entry name" value="L-asparaginase_N"/>
</dbReference>
<dbReference type="InterPro" id="IPR037152">
    <property type="entry name" value="L-asparaginase_N_sf"/>
</dbReference>
<dbReference type="NCBIfam" id="TIGR00520">
    <property type="entry name" value="asnASE_II"/>
    <property type="match status" value="1"/>
</dbReference>
<dbReference type="PANTHER" id="PTHR11707:SF28">
    <property type="entry name" value="60 KDA LYSOPHOSPHOLIPASE"/>
    <property type="match status" value="1"/>
</dbReference>
<dbReference type="PANTHER" id="PTHR11707">
    <property type="entry name" value="L-ASPARAGINASE"/>
    <property type="match status" value="1"/>
</dbReference>
<dbReference type="Pfam" id="PF00710">
    <property type="entry name" value="Asparaginase"/>
    <property type="match status" value="1"/>
</dbReference>
<dbReference type="Pfam" id="PF17763">
    <property type="entry name" value="Asparaginase_C"/>
    <property type="match status" value="1"/>
</dbReference>
<dbReference type="PIRSF" id="PIRSF001220">
    <property type="entry name" value="L-ASNase_gatD"/>
    <property type="match status" value="1"/>
</dbReference>
<dbReference type="PIRSF" id="PIRSF500176">
    <property type="entry name" value="L_ASNase"/>
    <property type="match status" value="1"/>
</dbReference>
<dbReference type="PRINTS" id="PR00139">
    <property type="entry name" value="ASNGLNASE"/>
</dbReference>
<dbReference type="SMART" id="SM00870">
    <property type="entry name" value="Asparaginase"/>
    <property type="match status" value="1"/>
</dbReference>
<dbReference type="SUPFAM" id="SSF53774">
    <property type="entry name" value="Glutaminase/Asparaginase"/>
    <property type="match status" value="1"/>
</dbReference>
<dbReference type="PROSITE" id="PS00144">
    <property type="entry name" value="ASN_GLN_ASE_1"/>
    <property type="match status" value="1"/>
</dbReference>
<dbReference type="PROSITE" id="PS00917">
    <property type="entry name" value="ASN_GLN_ASE_2"/>
    <property type="match status" value="1"/>
</dbReference>
<dbReference type="PROSITE" id="PS51732">
    <property type="entry name" value="ASN_GLN_ASE_3"/>
    <property type="match status" value="1"/>
</dbReference>